<evidence type="ECO:0000255" key="1">
    <source>
        <dbReference type="HAMAP-Rule" id="MF_00592"/>
    </source>
</evidence>
<organism>
    <name type="scientific">Escherichia coli O139:H28 (strain E24377A / ETEC)</name>
    <dbReference type="NCBI Taxonomy" id="331111"/>
    <lineage>
        <taxon>Bacteria</taxon>
        <taxon>Pseudomonadati</taxon>
        <taxon>Pseudomonadota</taxon>
        <taxon>Gammaproteobacteria</taxon>
        <taxon>Enterobacterales</taxon>
        <taxon>Enterobacteriaceae</taxon>
        <taxon>Escherichia</taxon>
    </lineage>
</organism>
<keyword id="KW-0963">Cytoplasm</keyword>
<keyword id="KW-0456">Lyase</keyword>
<keyword id="KW-1185">Reference proteome</keyword>
<keyword id="KW-0704">Schiff base</keyword>
<feature type="chain" id="PRO_1000072594" description="Deoxyribose-phosphate aldolase">
    <location>
        <begin position="1"/>
        <end position="259"/>
    </location>
</feature>
<feature type="active site" description="Proton donor/acceptor" evidence="1">
    <location>
        <position position="102"/>
    </location>
</feature>
<feature type="active site" description="Schiff-base intermediate with acetaldehyde" evidence="1">
    <location>
        <position position="167"/>
    </location>
</feature>
<feature type="active site" description="Proton donor/acceptor" evidence="1">
    <location>
        <position position="201"/>
    </location>
</feature>
<proteinExistence type="inferred from homology"/>
<dbReference type="EC" id="4.1.2.4" evidence="1"/>
<dbReference type="EMBL" id="CP000800">
    <property type="protein sequence ID" value="ABV18972.1"/>
    <property type="molecule type" value="Genomic_DNA"/>
</dbReference>
<dbReference type="RefSeq" id="WP_001295412.1">
    <property type="nucleotide sequence ID" value="NC_009801.1"/>
</dbReference>
<dbReference type="SMR" id="A7ZVS4"/>
<dbReference type="GeneID" id="93777463"/>
<dbReference type="KEGG" id="ecw:EcE24377A_4980"/>
<dbReference type="HOGENOM" id="CLU_053595_3_1_6"/>
<dbReference type="UniPathway" id="UPA00002">
    <property type="reaction ID" value="UER00468"/>
</dbReference>
<dbReference type="Proteomes" id="UP000001122">
    <property type="component" value="Chromosome"/>
</dbReference>
<dbReference type="GO" id="GO:0005737">
    <property type="term" value="C:cytoplasm"/>
    <property type="evidence" value="ECO:0007669"/>
    <property type="project" value="UniProtKB-SubCell"/>
</dbReference>
<dbReference type="GO" id="GO:0004139">
    <property type="term" value="F:deoxyribose-phosphate aldolase activity"/>
    <property type="evidence" value="ECO:0007669"/>
    <property type="project" value="UniProtKB-UniRule"/>
</dbReference>
<dbReference type="GO" id="GO:0006018">
    <property type="term" value="P:2-deoxyribose 1-phosphate catabolic process"/>
    <property type="evidence" value="ECO:0007669"/>
    <property type="project" value="UniProtKB-UniRule"/>
</dbReference>
<dbReference type="GO" id="GO:0016052">
    <property type="term" value="P:carbohydrate catabolic process"/>
    <property type="evidence" value="ECO:0007669"/>
    <property type="project" value="TreeGrafter"/>
</dbReference>
<dbReference type="GO" id="GO:0009264">
    <property type="term" value="P:deoxyribonucleotide catabolic process"/>
    <property type="evidence" value="ECO:0007669"/>
    <property type="project" value="InterPro"/>
</dbReference>
<dbReference type="CDD" id="cd00959">
    <property type="entry name" value="DeoC"/>
    <property type="match status" value="1"/>
</dbReference>
<dbReference type="FunFam" id="3.20.20.70:FF:000034">
    <property type="entry name" value="Deoxyribose-phosphate aldolase"/>
    <property type="match status" value="1"/>
</dbReference>
<dbReference type="Gene3D" id="3.20.20.70">
    <property type="entry name" value="Aldolase class I"/>
    <property type="match status" value="1"/>
</dbReference>
<dbReference type="HAMAP" id="MF_00592">
    <property type="entry name" value="DeoC_type2"/>
    <property type="match status" value="1"/>
</dbReference>
<dbReference type="InterPro" id="IPR013785">
    <property type="entry name" value="Aldolase_TIM"/>
</dbReference>
<dbReference type="InterPro" id="IPR011343">
    <property type="entry name" value="DeoC"/>
</dbReference>
<dbReference type="InterPro" id="IPR002915">
    <property type="entry name" value="DeoC/FbaB/LacD_aldolase"/>
</dbReference>
<dbReference type="InterPro" id="IPR023649">
    <property type="entry name" value="DeoC_typeII"/>
</dbReference>
<dbReference type="NCBIfam" id="TIGR00126">
    <property type="entry name" value="deoC"/>
    <property type="match status" value="1"/>
</dbReference>
<dbReference type="PANTHER" id="PTHR10889">
    <property type="entry name" value="DEOXYRIBOSE-PHOSPHATE ALDOLASE"/>
    <property type="match status" value="1"/>
</dbReference>
<dbReference type="PANTHER" id="PTHR10889:SF3">
    <property type="entry name" value="DEOXYRIBOSE-PHOSPHATE ALDOLASE"/>
    <property type="match status" value="1"/>
</dbReference>
<dbReference type="Pfam" id="PF01791">
    <property type="entry name" value="DeoC"/>
    <property type="match status" value="1"/>
</dbReference>
<dbReference type="PIRSF" id="PIRSF001357">
    <property type="entry name" value="DeoC"/>
    <property type="match status" value="1"/>
</dbReference>
<dbReference type="SMART" id="SM01133">
    <property type="entry name" value="DeoC"/>
    <property type="match status" value="1"/>
</dbReference>
<dbReference type="SUPFAM" id="SSF51569">
    <property type="entry name" value="Aldolase"/>
    <property type="match status" value="1"/>
</dbReference>
<sequence length="259" mass="27748">MTDLKASSLRALKLMDLTTLNDDDTDEKVIALCHQAKTPVGNTAAICIYPRFIPIARKTLKEQGTPEIRIATVTNFPHGNDDIEIALAETRAAIAYGADEVDVVFPYRALMAGNEQVGFDLVKACKEACAAANVLLKVIIETGELKDEALIRKASEISIKAGADFIKTSTGKVAVNATPESARIMMEVIRDMGVEKTVGFKPAGGVRTAEDAQKYLAIADELFGADWADARHYRFGASSLLASLLKALGHGDGKSASSY</sequence>
<protein>
    <recommendedName>
        <fullName evidence="1">Deoxyribose-phosphate aldolase</fullName>
        <shortName evidence="1">DERA</shortName>
        <ecNumber evidence="1">4.1.2.4</ecNumber>
    </recommendedName>
    <alternativeName>
        <fullName evidence="1">2-deoxy-D-ribose 5-phosphate aldolase</fullName>
    </alternativeName>
    <alternativeName>
        <fullName evidence="1">Phosphodeoxyriboaldolase</fullName>
        <shortName evidence="1">Deoxyriboaldolase</shortName>
    </alternativeName>
</protein>
<gene>
    <name evidence="1" type="primary">deoC</name>
    <name type="ordered locus">EcE24377A_4980</name>
</gene>
<accession>A7ZVS4</accession>
<reference key="1">
    <citation type="journal article" date="2008" name="J. Bacteriol.">
        <title>The pangenome structure of Escherichia coli: comparative genomic analysis of E. coli commensal and pathogenic isolates.</title>
        <authorList>
            <person name="Rasko D.A."/>
            <person name="Rosovitz M.J."/>
            <person name="Myers G.S.A."/>
            <person name="Mongodin E.F."/>
            <person name="Fricke W.F."/>
            <person name="Gajer P."/>
            <person name="Crabtree J."/>
            <person name="Sebaihia M."/>
            <person name="Thomson N.R."/>
            <person name="Chaudhuri R."/>
            <person name="Henderson I.R."/>
            <person name="Sperandio V."/>
            <person name="Ravel J."/>
        </authorList>
    </citation>
    <scope>NUCLEOTIDE SEQUENCE [LARGE SCALE GENOMIC DNA]</scope>
    <source>
        <strain>E24377A / ETEC</strain>
    </source>
</reference>
<comment type="function">
    <text evidence="1">Catalyzes a reversible aldol reaction between acetaldehyde and D-glyceraldehyde 3-phosphate to generate 2-deoxy-D-ribose 5-phosphate.</text>
</comment>
<comment type="catalytic activity">
    <reaction evidence="1">
        <text>2-deoxy-D-ribose 5-phosphate = D-glyceraldehyde 3-phosphate + acetaldehyde</text>
        <dbReference type="Rhea" id="RHEA:12821"/>
        <dbReference type="ChEBI" id="CHEBI:15343"/>
        <dbReference type="ChEBI" id="CHEBI:59776"/>
        <dbReference type="ChEBI" id="CHEBI:62877"/>
        <dbReference type="EC" id="4.1.2.4"/>
    </reaction>
</comment>
<comment type="pathway">
    <text evidence="1">Carbohydrate degradation; 2-deoxy-D-ribose 1-phosphate degradation; D-glyceraldehyde 3-phosphate and acetaldehyde from 2-deoxy-alpha-D-ribose 1-phosphate: step 2/2.</text>
</comment>
<comment type="subcellular location">
    <subcellularLocation>
        <location evidence="1">Cytoplasm</location>
    </subcellularLocation>
</comment>
<comment type="similarity">
    <text evidence="1">Belongs to the DeoC/FbaB aldolase family. DeoC type 2 subfamily.</text>
</comment>
<name>DEOC_ECO24</name>